<evidence type="ECO:0000250" key="1"/>
<evidence type="ECO:0000255" key="2">
    <source>
        <dbReference type="PROSITE-ProRule" id="PRU01185"/>
    </source>
</evidence>
<evidence type="ECO:0000256" key="3">
    <source>
        <dbReference type="SAM" id="MobiDB-lite"/>
    </source>
</evidence>
<organism>
    <name type="scientific">Kluyveromyces lactis (strain ATCC 8585 / CBS 2359 / DSM 70799 / NBRC 1267 / NRRL Y-1140 / WM37)</name>
    <name type="common">Yeast</name>
    <name type="synonym">Candida sphaerica</name>
    <dbReference type="NCBI Taxonomy" id="284590"/>
    <lineage>
        <taxon>Eukaryota</taxon>
        <taxon>Fungi</taxon>
        <taxon>Dikarya</taxon>
        <taxon>Ascomycota</taxon>
        <taxon>Saccharomycotina</taxon>
        <taxon>Saccharomycetes</taxon>
        <taxon>Saccharomycetales</taxon>
        <taxon>Saccharomycetaceae</taxon>
        <taxon>Kluyveromyces</taxon>
    </lineage>
</organism>
<sequence>MSDEEDYAEYMMSEEDMSSFEMDVDSDVEPDDAGLEQDQQVTGDDYDGSAGNSGDSMAAVEKQCESWYDTGKAFKNDDQFEEARKWFMKCHASPIWWFKSLKQIIKSDLSQGLRVNERLREMFELVSTKKEMIGEESYIYGSVKRLINRIVPDLNSHLLFTERLRQSSIDVSTLMERQRYLDILEKSVADMDQELRDLVTIRKIVYCVWIHVLRWEQIPKETLEDLHENVNLETYFILLQLHVRTFVDEDIVHLIELVKVVDEMGRFMTNSLSVSQIPTVTSVYHFARFLTLWKSTDHYNQSQMLSKCEGELTSCFQDLEAIGGTERDGLMLTRFSLMGIVFCHLLLNDKTKLVPFELEQIKVLEADELVVLLQELYQCWLDMDIYALEQCLLQLEDFYSPWYNVMIEKIIALCQSNKLWKRIAPTYSCIALQDLMAKLETGNTITMNRDQLLTLLMKSIAKDTADVYYKLDLVEDYVYFGEEYFVPLRSEELNIVNPLSQQMGSEIIGKDEWLCNVSNWHKPKVPKKLSAIEFMDYMKAARVTISQTNLAHHEPTVTSFLLKLSTITHAQLTQNSSSLASTN</sequence>
<accession>Q6CXL5</accession>
<name>CSN10_KLULA</name>
<reference key="1">
    <citation type="journal article" date="2004" name="Nature">
        <title>Genome evolution in yeasts.</title>
        <authorList>
            <person name="Dujon B."/>
            <person name="Sherman D."/>
            <person name="Fischer G."/>
            <person name="Durrens P."/>
            <person name="Casaregola S."/>
            <person name="Lafontaine I."/>
            <person name="de Montigny J."/>
            <person name="Marck C."/>
            <person name="Neuveglise C."/>
            <person name="Talla E."/>
            <person name="Goffard N."/>
            <person name="Frangeul L."/>
            <person name="Aigle M."/>
            <person name="Anthouard V."/>
            <person name="Babour A."/>
            <person name="Barbe V."/>
            <person name="Barnay S."/>
            <person name="Blanchin S."/>
            <person name="Beckerich J.-M."/>
            <person name="Beyne E."/>
            <person name="Bleykasten C."/>
            <person name="Boisrame A."/>
            <person name="Boyer J."/>
            <person name="Cattolico L."/>
            <person name="Confanioleri F."/>
            <person name="de Daruvar A."/>
            <person name="Despons L."/>
            <person name="Fabre E."/>
            <person name="Fairhead C."/>
            <person name="Ferry-Dumazet H."/>
            <person name="Groppi A."/>
            <person name="Hantraye F."/>
            <person name="Hennequin C."/>
            <person name="Jauniaux N."/>
            <person name="Joyet P."/>
            <person name="Kachouri R."/>
            <person name="Kerrest A."/>
            <person name="Koszul R."/>
            <person name="Lemaire M."/>
            <person name="Lesur I."/>
            <person name="Ma L."/>
            <person name="Muller H."/>
            <person name="Nicaud J.-M."/>
            <person name="Nikolski M."/>
            <person name="Oztas S."/>
            <person name="Ozier-Kalogeropoulos O."/>
            <person name="Pellenz S."/>
            <person name="Potier S."/>
            <person name="Richard G.-F."/>
            <person name="Straub M.-L."/>
            <person name="Suleau A."/>
            <person name="Swennen D."/>
            <person name="Tekaia F."/>
            <person name="Wesolowski-Louvel M."/>
            <person name="Westhof E."/>
            <person name="Wirth B."/>
            <person name="Zeniou-Meyer M."/>
            <person name="Zivanovic Y."/>
            <person name="Bolotin-Fukuhara M."/>
            <person name="Thierry A."/>
            <person name="Bouchier C."/>
            <person name="Caudron B."/>
            <person name="Scarpelli C."/>
            <person name="Gaillardin C."/>
            <person name="Weissenbach J."/>
            <person name="Wincker P."/>
            <person name="Souciet J.-L."/>
        </authorList>
    </citation>
    <scope>NUCLEOTIDE SEQUENCE [LARGE SCALE GENOMIC DNA]</scope>
    <source>
        <strain>ATCC 8585 / CBS 2359 / DSM 70799 / NBRC 1267 / NRRL Y-1140 / WM37</strain>
    </source>
</reference>
<dbReference type="EMBL" id="CR382121">
    <property type="protein sequence ID" value="CAH02912.1"/>
    <property type="molecule type" value="Genomic_DNA"/>
</dbReference>
<dbReference type="RefSeq" id="XP_451324.1">
    <property type="nucleotide sequence ID" value="XM_451324.1"/>
</dbReference>
<dbReference type="FunCoup" id="Q6CXL5">
    <property type="interactions" value="163"/>
</dbReference>
<dbReference type="STRING" id="284590.Q6CXL5"/>
<dbReference type="PaxDb" id="284590-Q6CXL5"/>
<dbReference type="KEGG" id="kla:KLLA0_A07293g"/>
<dbReference type="eggNOG" id="ENOG502RXR9">
    <property type="taxonomic scope" value="Eukaryota"/>
</dbReference>
<dbReference type="HOGENOM" id="CLU_031729_0_0_1"/>
<dbReference type="InParanoid" id="Q6CXL5"/>
<dbReference type="Proteomes" id="UP000000598">
    <property type="component" value="Chromosome A"/>
</dbReference>
<dbReference type="GO" id="GO:0008180">
    <property type="term" value="C:COP9 signalosome"/>
    <property type="evidence" value="ECO:0007669"/>
    <property type="project" value="UniProtKB-KW"/>
</dbReference>
<dbReference type="GO" id="GO:0005737">
    <property type="term" value="C:cytoplasm"/>
    <property type="evidence" value="ECO:0007669"/>
    <property type="project" value="UniProtKB-SubCell"/>
</dbReference>
<dbReference type="InterPro" id="IPR000717">
    <property type="entry name" value="PCI_dom"/>
</dbReference>
<dbReference type="PROSITE" id="PS50250">
    <property type="entry name" value="PCI"/>
    <property type="match status" value="1"/>
</dbReference>
<comment type="function">
    <text evidence="1">Component of the COP9 signalosome (CSN) complex that acts as an regulator of the ubiquitin (Ubl) conjugation pathway by mediating the deneddylation of the cullin subunit of SCF-type E3 ubiquitin-protein ligase complexes. The CSN complex is involved in the regulation of the mating pheromone response (By similarity).</text>
</comment>
<comment type="subunit">
    <text>Component of a COP9 signalosome-like (CSN) complex.</text>
</comment>
<comment type="subcellular location">
    <subcellularLocation>
        <location evidence="1">Cytoplasm</location>
    </subcellularLocation>
    <subcellularLocation>
        <location evidence="1">Nucleus</location>
    </subcellularLocation>
</comment>
<feature type="chain" id="PRO_0000121023" description="COP9 signalosome complex subunit 10">
    <location>
        <begin position="1"/>
        <end position="583"/>
    </location>
</feature>
<feature type="domain" description="PCI" evidence="2">
    <location>
        <begin position="297"/>
        <end position="485"/>
    </location>
</feature>
<feature type="region of interest" description="Disordered" evidence="3">
    <location>
        <begin position="1"/>
        <end position="55"/>
    </location>
</feature>
<feature type="compositionally biased region" description="Acidic residues" evidence="3">
    <location>
        <begin position="1"/>
        <end position="35"/>
    </location>
</feature>
<gene>
    <name type="primary">RRI2</name>
    <name type="synonym">CSN10</name>
    <name type="ordered locus">KLLA0A07293g</name>
</gene>
<proteinExistence type="inferred from homology"/>
<keyword id="KW-0963">Cytoplasm</keyword>
<keyword id="KW-0539">Nucleus</keyword>
<keyword id="KW-1185">Reference proteome</keyword>
<keyword id="KW-0736">Signalosome</keyword>
<protein>
    <recommendedName>
        <fullName>COP9 signalosome complex subunit 10</fullName>
    </recommendedName>
</protein>